<organism>
    <name type="scientific">Mugil cephalus</name>
    <name type="common">Flathead mullet</name>
    <name type="synonym">Mugil japonicus</name>
    <dbReference type="NCBI Taxonomy" id="48193"/>
    <lineage>
        <taxon>Eukaryota</taxon>
        <taxon>Metazoa</taxon>
        <taxon>Chordata</taxon>
        <taxon>Craniata</taxon>
        <taxon>Vertebrata</taxon>
        <taxon>Euteleostomi</taxon>
        <taxon>Actinopterygii</taxon>
        <taxon>Neopterygii</taxon>
        <taxon>Teleostei</taxon>
        <taxon>Neoteleostei</taxon>
        <taxon>Acanthomorphata</taxon>
        <taxon>Ovalentaria</taxon>
        <taxon>Mugilomorphae</taxon>
        <taxon>Mugilidae</taxon>
        <taxon>Mugil</taxon>
    </lineage>
</organism>
<proteinExistence type="evidence at protein level"/>
<reference key="1">
    <citation type="journal article" date="1987" name="J. Biochem.">
        <title>Primary structures of M6 and M7 of mugiline beta (Mugil japonicus).</title>
        <authorList>
            <person name="Okamoto Y."/>
            <person name="Muta E."/>
            <person name="Ota S."/>
        </authorList>
    </citation>
    <scope>PROTEIN SEQUENCE</scope>
    <source>
        <tissue>Sperm</tissue>
    </source>
</reference>
<sequence length="33" mass="4473">PRRRRETSRPIRRRRRARRAPIRRRRRVVRRRR</sequence>
<dbReference type="PIR" id="A26762">
    <property type="entry name" value="A26762"/>
</dbReference>
<dbReference type="PIR" id="B26762">
    <property type="entry name" value="B26762"/>
</dbReference>
<dbReference type="GO" id="GO:0000786">
    <property type="term" value="C:nucleosome"/>
    <property type="evidence" value="ECO:0007669"/>
    <property type="project" value="UniProtKB-KW"/>
</dbReference>
<dbReference type="GO" id="GO:0005634">
    <property type="term" value="C:nucleus"/>
    <property type="evidence" value="ECO:0007669"/>
    <property type="project" value="UniProtKB-SubCell"/>
</dbReference>
<dbReference type="GO" id="GO:0003677">
    <property type="term" value="F:DNA binding"/>
    <property type="evidence" value="ECO:0007669"/>
    <property type="project" value="UniProtKB-KW"/>
</dbReference>
<dbReference type="GO" id="GO:0030154">
    <property type="term" value="P:cell differentiation"/>
    <property type="evidence" value="ECO:0007669"/>
    <property type="project" value="UniProtKB-KW"/>
</dbReference>
<dbReference type="GO" id="GO:0030261">
    <property type="term" value="P:chromosome condensation"/>
    <property type="evidence" value="ECO:0007669"/>
    <property type="project" value="UniProtKB-KW"/>
</dbReference>
<dbReference type="GO" id="GO:0007283">
    <property type="term" value="P:spermatogenesis"/>
    <property type="evidence" value="ECO:0007669"/>
    <property type="project" value="UniProtKB-KW"/>
</dbReference>
<evidence type="ECO:0000256" key="1">
    <source>
        <dbReference type="SAM" id="MobiDB-lite"/>
    </source>
</evidence>
<feature type="peptide" id="PRO_0000044833" description="Protamine-M6/M7">
    <location>
        <begin position="1"/>
        <end position="33"/>
    </location>
</feature>
<feature type="region of interest" description="Disordered" evidence="1">
    <location>
        <begin position="1"/>
        <end position="33"/>
    </location>
</feature>
<feature type="sequence variant" description="In protamine-M7.">
    <original>E</original>
    <variation>Q</variation>
    <location>
        <position position="6"/>
    </location>
</feature>
<feature type="sequence variant">
    <original>I</original>
    <variation>M</variation>
    <location>
        <position position="22"/>
    </location>
</feature>
<keyword id="KW-0158">Chromosome</keyword>
<keyword id="KW-0217">Developmental protein</keyword>
<keyword id="KW-0221">Differentiation</keyword>
<keyword id="KW-0903">Direct protein sequencing</keyword>
<keyword id="KW-0226">DNA condensation</keyword>
<keyword id="KW-0238">DNA-binding</keyword>
<keyword id="KW-0544">Nucleosome core</keyword>
<keyword id="KW-0539">Nucleus</keyword>
<keyword id="KW-0744">Spermatogenesis</keyword>
<comment type="function">
    <text>Protamines substitute for histones in the chromatin of sperm during the haploid phase of spermatogenesis. They compact sperm DNA into a highly condensed, stable and inactive complex.</text>
</comment>
<comment type="subcellular location">
    <subcellularLocation>
        <location>Nucleus</location>
    </subcellularLocation>
    <subcellularLocation>
        <location>Chromosome</location>
    </subcellularLocation>
</comment>
<comment type="tissue specificity">
    <text>Testis.</text>
</comment>
<comment type="miscellaneous">
    <text>The sequence of component M6 is shown.</text>
</comment>
<accession>P08130</accession>
<protein>
    <recommendedName>
        <fullName>Protamine-M6/M7</fullName>
    </recommendedName>
    <alternativeName>
        <fullName>Mugiline beta</fullName>
    </alternativeName>
</protein>
<name>PRTB_MUGCE</name>